<comment type="function">
    <text evidence="1">Essential for the production of a quorum sensing system signal molecule, the autoinducing peptide (AIP). This quorum sensing system is responsible for the regulation of the expression of virulence factor genes. Involved in the proteolytic processing of AgrD, the precursor of AIP.</text>
</comment>
<comment type="subcellular location">
    <subcellularLocation>
        <location evidence="1">Cell membrane</location>
        <topology evidence="1">Multi-pass membrane protein</topology>
    </subcellularLocation>
</comment>
<comment type="similarity">
    <text evidence="1">Belongs to the AgrB family.</text>
</comment>
<keyword id="KW-1003">Cell membrane</keyword>
<keyword id="KW-0378">Hydrolase</keyword>
<keyword id="KW-0472">Membrane</keyword>
<keyword id="KW-0645">Protease</keyword>
<keyword id="KW-0673">Quorum sensing</keyword>
<keyword id="KW-0812">Transmembrane</keyword>
<keyword id="KW-1133">Transmembrane helix</keyword>
<keyword id="KW-0843">Virulence</keyword>
<evidence type="ECO:0000255" key="1">
    <source>
        <dbReference type="HAMAP-Rule" id="MF_00784"/>
    </source>
</evidence>
<gene>
    <name evidence="1" type="primary">agrB</name>
    <name type="ordered locus">SAUSA300_1989</name>
</gene>
<feature type="chain" id="PRO_1000046838" description="Accessory gene regulator protein B">
    <location>
        <begin position="1"/>
        <end position="189"/>
    </location>
</feature>
<feature type="transmembrane region" description="Helical" evidence="1">
    <location>
        <begin position="49"/>
        <end position="69"/>
    </location>
</feature>
<feature type="transmembrane region" description="Helical" evidence="1">
    <location>
        <begin position="81"/>
        <end position="100"/>
    </location>
</feature>
<feature type="transmembrane region" description="Helical" evidence="1">
    <location>
        <begin position="110"/>
        <end position="130"/>
    </location>
</feature>
<feature type="transmembrane region" description="Helical" evidence="1">
    <location>
        <begin position="143"/>
        <end position="163"/>
    </location>
</feature>
<feature type="transmembrane region" description="Helical" evidence="1">
    <location>
        <begin position="164"/>
        <end position="184"/>
    </location>
</feature>
<reference key="1">
    <citation type="journal article" date="2006" name="Lancet">
        <title>Complete genome sequence of USA300, an epidemic clone of community-acquired meticillin-resistant Staphylococcus aureus.</title>
        <authorList>
            <person name="Diep B.A."/>
            <person name="Gill S.R."/>
            <person name="Chang R.F."/>
            <person name="Phan T.H."/>
            <person name="Chen J.H."/>
            <person name="Davidson M.G."/>
            <person name="Lin F."/>
            <person name="Lin J."/>
            <person name="Carleton H.A."/>
            <person name="Mongodin E.F."/>
            <person name="Sensabaugh G.F."/>
            <person name="Perdreau-Remington F."/>
        </authorList>
    </citation>
    <scope>NUCLEOTIDE SEQUENCE [LARGE SCALE GENOMIC DNA]</scope>
    <source>
        <strain>USA300</strain>
    </source>
</reference>
<sequence>MNYFDNKIDQFATYLQKRNNLDHIQFLQVRLGMQVLAKNIGKLIVMYTIAYILNIFLFTLITNLTFYLIRRHAHGAHAPSSFWCYVESIILFILLPLVIVNFHINFLIMIILTVISLGVISVYAPAATKKKPIPVRLIKRKKYYAIIVSLTLFIITLIIKEPFAQFIQLGIIIEAITLLPIFFIKEDLK</sequence>
<protein>
    <recommendedName>
        <fullName evidence="1">Accessory gene regulator protein B</fullName>
        <ecNumber evidence="1">3.4.-.-</ecNumber>
    </recommendedName>
</protein>
<name>AGRB_STAA3</name>
<organism>
    <name type="scientific">Staphylococcus aureus (strain USA300)</name>
    <dbReference type="NCBI Taxonomy" id="367830"/>
    <lineage>
        <taxon>Bacteria</taxon>
        <taxon>Bacillati</taxon>
        <taxon>Bacillota</taxon>
        <taxon>Bacilli</taxon>
        <taxon>Bacillales</taxon>
        <taxon>Staphylococcaceae</taxon>
        <taxon>Staphylococcus</taxon>
    </lineage>
</organism>
<proteinExistence type="inferred from homology"/>
<accession>Q2FF88</accession>
<dbReference type="EC" id="3.4.-.-" evidence="1"/>
<dbReference type="EMBL" id="CP000255">
    <property type="protein sequence ID" value="ABD21641.1"/>
    <property type="molecule type" value="Genomic_DNA"/>
</dbReference>
<dbReference type="RefSeq" id="WP_001105707.1">
    <property type="nucleotide sequence ID" value="NZ_CP027476.1"/>
</dbReference>
<dbReference type="MEROPS" id="C75.001"/>
<dbReference type="KEGG" id="saa:SAUSA300_1989"/>
<dbReference type="HOGENOM" id="CLU_098969_2_2_9"/>
<dbReference type="OMA" id="PADHENK"/>
<dbReference type="Proteomes" id="UP000001939">
    <property type="component" value="Chromosome"/>
</dbReference>
<dbReference type="GO" id="GO:0005886">
    <property type="term" value="C:plasma membrane"/>
    <property type="evidence" value="ECO:0007669"/>
    <property type="project" value="UniProtKB-SubCell"/>
</dbReference>
<dbReference type="GO" id="GO:0008233">
    <property type="term" value="F:peptidase activity"/>
    <property type="evidence" value="ECO:0007669"/>
    <property type="project" value="UniProtKB-UniRule"/>
</dbReference>
<dbReference type="GO" id="GO:0006508">
    <property type="term" value="P:proteolysis"/>
    <property type="evidence" value="ECO:0007669"/>
    <property type="project" value="UniProtKB-KW"/>
</dbReference>
<dbReference type="GO" id="GO:0009372">
    <property type="term" value="P:quorum sensing"/>
    <property type="evidence" value="ECO:0007669"/>
    <property type="project" value="UniProtKB-UniRule"/>
</dbReference>
<dbReference type="HAMAP" id="MF_00784">
    <property type="entry name" value="AgrB"/>
    <property type="match status" value="1"/>
</dbReference>
<dbReference type="InterPro" id="IPR006741">
    <property type="entry name" value="AgrB"/>
</dbReference>
<dbReference type="Pfam" id="PF04647">
    <property type="entry name" value="AgrB"/>
    <property type="match status" value="1"/>
</dbReference>
<dbReference type="SMART" id="SM00793">
    <property type="entry name" value="AgrB"/>
    <property type="match status" value="1"/>
</dbReference>